<reference key="1">
    <citation type="submission" date="2005-08" db="EMBL/GenBank/DDBJ databases">
        <title>Complete sequence of Synechococcus sp. CC9902.</title>
        <authorList>
            <person name="Copeland A."/>
            <person name="Lucas S."/>
            <person name="Lapidus A."/>
            <person name="Barry K."/>
            <person name="Detter J.C."/>
            <person name="Glavina T."/>
            <person name="Hammon N."/>
            <person name="Israni S."/>
            <person name="Pitluck S."/>
            <person name="Martinez M."/>
            <person name="Schmutz J."/>
            <person name="Larimer F."/>
            <person name="Land M."/>
            <person name="Kyrpides N."/>
            <person name="Ivanova N."/>
            <person name="Richardson P."/>
        </authorList>
    </citation>
    <scope>NUCLEOTIDE SEQUENCE [LARGE SCALE GENOMIC DNA]</scope>
    <source>
        <strain>CC9902</strain>
    </source>
</reference>
<sequence length="403" mass="44225">MGRAKKVVLAYSGGVDTSVCIPYLKQEWGVEEVITFAADLGQGDELEPIRQKALDAGASQSLVGDLIQPFIEDFAFPAIRANALYEGRYPLSTALARPLIAKRLVEVAREVGADAVAHGCTGKGNDQVRFDVAIASLAPDLKVLTPAREWGMSREETIAYGERFGMPSPVSKKSPYSIDLNLLGRSIEAGPLEDPMVAPPEEVFAMTRSITDAPDAFEEIEIRFESGNPVAINGQSLDPVAMIREANRLAGTHGIGRLDMIENRVVGIKSREIYETPGLLLLIQAHQELESLTLAADVLRSKRQLEMQWSDLVYQGLWFGPLKEALDGFMDRTQEHVNGVVRLRLHKGNATVIGRGSSDSSLYVPEMASYGSEDQFDHRAAEGFIYVWGLPIRLWAASKRSSR</sequence>
<organism>
    <name type="scientific">Synechococcus sp. (strain CC9902)</name>
    <dbReference type="NCBI Taxonomy" id="316279"/>
    <lineage>
        <taxon>Bacteria</taxon>
        <taxon>Bacillati</taxon>
        <taxon>Cyanobacteriota</taxon>
        <taxon>Cyanophyceae</taxon>
        <taxon>Synechococcales</taxon>
        <taxon>Synechococcaceae</taxon>
        <taxon>Synechococcus</taxon>
    </lineage>
</organism>
<comment type="catalytic activity">
    <reaction evidence="1">
        <text>L-citrulline + L-aspartate + ATP = 2-(N(omega)-L-arginino)succinate + AMP + diphosphate + H(+)</text>
        <dbReference type="Rhea" id="RHEA:10932"/>
        <dbReference type="ChEBI" id="CHEBI:15378"/>
        <dbReference type="ChEBI" id="CHEBI:29991"/>
        <dbReference type="ChEBI" id="CHEBI:30616"/>
        <dbReference type="ChEBI" id="CHEBI:33019"/>
        <dbReference type="ChEBI" id="CHEBI:57472"/>
        <dbReference type="ChEBI" id="CHEBI:57743"/>
        <dbReference type="ChEBI" id="CHEBI:456215"/>
        <dbReference type="EC" id="6.3.4.5"/>
    </reaction>
</comment>
<comment type="pathway">
    <text evidence="1">Amino-acid biosynthesis; L-arginine biosynthesis; L-arginine from L-ornithine and carbamoyl phosphate: step 2/3.</text>
</comment>
<comment type="subunit">
    <text evidence="1">Homotetramer.</text>
</comment>
<comment type="subcellular location">
    <subcellularLocation>
        <location evidence="1">Cytoplasm</location>
    </subcellularLocation>
</comment>
<comment type="similarity">
    <text evidence="1">Belongs to the argininosuccinate synthase family. Type 1 subfamily.</text>
</comment>
<evidence type="ECO:0000255" key="1">
    <source>
        <dbReference type="HAMAP-Rule" id="MF_00005"/>
    </source>
</evidence>
<feature type="chain" id="PRO_0000263983" description="Argininosuccinate synthase">
    <location>
        <begin position="1"/>
        <end position="403"/>
    </location>
</feature>
<feature type="binding site" evidence="1">
    <location>
        <begin position="10"/>
        <end position="18"/>
    </location>
    <ligand>
        <name>ATP</name>
        <dbReference type="ChEBI" id="CHEBI:30616"/>
    </ligand>
</feature>
<feature type="binding site" evidence="1">
    <location>
        <position position="38"/>
    </location>
    <ligand>
        <name>ATP</name>
        <dbReference type="ChEBI" id="CHEBI:30616"/>
    </ligand>
</feature>
<feature type="binding site" evidence="1">
    <location>
        <position position="89"/>
    </location>
    <ligand>
        <name>L-citrulline</name>
        <dbReference type="ChEBI" id="CHEBI:57743"/>
    </ligand>
</feature>
<feature type="binding site" evidence="1">
    <location>
        <position position="119"/>
    </location>
    <ligand>
        <name>ATP</name>
        <dbReference type="ChEBI" id="CHEBI:30616"/>
    </ligand>
</feature>
<feature type="binding site" evidence="1">
    <location>
        <position position="121"/>
    </location>
    <ligand>
        <name>L-aspartate</name>
        <dbReference type="ChEBI" id="CHEBI:29991"/>
    </ligand>
</feature>
<feature type="binding site" evidence="1">
    <location>
        <position position="125"/>
    </location>
    <ligand>
        <name>L-aspartate</name>
        <dbReference type="ChEBI" id="CHEBI:29991"/>
    </ligand>
</feature>
<feature type="binding site" evidence="1">
    <location>
        <position position="125"/>
    </location>
    <ligand>
        <name>L-citrulline</name>
        <dbReference type="ChEBI" id="CHEBI:57743"/>
    </ligand>
</feature>
<feature type="binding site" evidence="1">
    <location>
        <position position="126"/>
    </location>
    <ligand>
        <name>L-aspartate</name>
        <dbReference type="ChEBI" id="CHEBI:29991"/>
    </ligand>
</feature>
<feature type="binding site" evidence="1">
    <location>
        <position position="129"/>
    </location>
    <ligand>
        <name>L-citrulline</name>
        <dbReference type="ChEBI" id="CHEBI:57743"/>
    </ligand>
</feature>
<feature type="binding site" evidence="1">
    <location>
        <position position="177"/>
    </location>
    <ligand>
        <name>L-citrulline</name>
        <dbReference type="ChEBI" id="CHEBI:57743"/>
    </ligand>
</feature>
<feature type="binding site" evidence="1">
    <location>
        <position position="186"/>
    </location>
    <ligand>
        <name>L-citrulline</name>
        <dbReference type="ChEBI" id="CHEBI:57743"/>
    </ligand>
</feature>
<feature type="binding site" evidence="1">
    <location>
        <position position="262"/>
    </location>
    <ligand>
        <name>L-citrulline</name>
        <dbReference type="ChEBI" id="CHEBI:57743"/>
    </ligand>
</feature>
<feature type="binding site" evidence="1">
    <location>
        <position position="274"/>
    </location>
    <ligand>
        <name>L-citrulline</name>
        <dbReference type="ChEBI" id="CHEBI:57743"/>
    </ligand>
</feature>
<gene>
    <name evidence="1" type="primary">argG</name>
    <name type="ordered locus">Syncc9902_2308</name>
</gene>
<name>ASSY_SYNS9</name>
<accession>Q3AVL9</accession>
<protein>
    <recommendedName>
        <fullName evidence="1">Argininosuccinate synthase</fullName>
        <ecNumber evidence="1">6.3.4.5</ecNumber>
    </recommendedName>
    <alternativeName>
        <fullName evidence="1">Citrulline--aspartate ligase</fullName>
    </alternativeName>
</protein>
<proteinExistence type="inferred from homology"/>
<keyword id="KW-0028">Amino-acid biosynthesis</keyword>
<keyword id="KW-0055">Arginine biosynthesis</keyword>
<keyword id="KW-0067">ATP-binding</keyword>
<keyword id="KW-0963">Cytoplasm</keyword>
<keyword id="KW-0436">Ligase</keyword>
<keyword id="KW-0547">Nucleotide-binding</keyword>
<keyword id="KW-1185">Reference proteome</keyword>
<dbReference type="EC" id="6.3.4.5" evidence="1"/>
<dbReference type="EMBL" id="CP000097">
    <property type="protein sequence ID" value="ABB27266.1"/>
    <property type="molecule type" value="Genomic_DNA"/>
</dbReference>
<dbReference type="RefSeq" id="WP_011361042.1">
    <property type="nucleotide sequence ID" value="NC_007513.1"/>
</dbReference>
<dbReference type="SMR" id="Q3AVL9"/>
<dbReference type="STRING" id="316279.Syncc9902_2308"/>
<dbReference type="KEGG" id="sye:Syncc9902_2308"/>
<dbReference type="eggNOG" id="COG0137">
    <property type="taxonomic scope" value="Bacteria"/>
</dbReference>
<dbReference type="HOGENOM" id="CLU_032784_4_2_3"/>
<dbReference type="OrthoDB" id="9801641at2"/>
<dbReference type="UniPathway" id="UPA00068">
    <property type="reaction ID" value="UER00113"/>
</dbReference>
<dbReference type="Proteomes" id="UP000002712">
    <property type="component" value="Chromosome"/>
</dbReference>
<dbReference type="GO" id="GO:0005737">
    <property type="term" value="C:cytoplasm"/>
    <property type="evidence" value="ECO:0007669"/>
    <property type="project" value="UniProtKB-SubCell"/>
</dbReference>
<dbReference type="GO" id="GO:0004055">
    <property type="term" value="F:argininosuccinate synthase activity"/>
    <property type="evidence" value="ECO:0007669"/>
    <property type="project" value="UniProtKB-UniRule"/>
</dbReference>
<dbReference type="GO" id="GO:0005524">
    <property type="term" value="F:ATP binding"/>
    <property type="evidence" value="ECO:0007669"/>
    <property type="project" value="UniProtKB-UniRule"/>
</dbReference>
<dbReference type="GO" id="GO:0000053">
    <property type="term" value="P:argininosuccinate metabolic process"/>
    <property type="evidence" value="ECO:0007669"/>
    <property type="project" value="TreeGrafter"/>
</dbReference>
<dbReference type="GO" id="GO:0006526">
    <property type="term" value="P:L-arginine biosynthetic process"/>
    <property type="evidence" value="ECO:0007669"/>
    <property type="project" value="UniProtKB-UniRule"/>
</dbReference>
<dbReference type="GO" id="GO:0000050">
    <property type="term" value="P:urea cycle"/>
    <property type="evidence" value="ECO:0007669"/>
    <property type="project" value="TreeGrafter"/>
</dbReference>
<dbReference type="CDD" id="cd01999">
    <property type="entry name" value="ASS"/>
    <property type="match status" value="1"/>
</dbReference>
<dbReference type="FunFam" id="3.40.50.620:FF:000019">
    <property type="entry name" value="Argininosuccinate synthase"/>
    <property type="match status" value="1"/>
</dbReference>
<dbReference type="FunFam" id="3.90.1260.10:FF:000007">
    <property type="entry name" value="Argininosuccinate synthase"/>
    <property type="match status" value="1"/>
</dbReference>
<dbReference type="Gene3D" id="3.90.1260.10">
    <property type="entry name" value="Argininosuccinate synthetase, chain A, domain 2"/>
    <property type="match status" value="1"/>
</dbReference>
<dbReference type="Gene3D" id="3.40.50.620">
    <property type="entry name" value="HUPs"/>
    <property type="match status" value="1"/>
</dbReference>
<dbReference type="Gene3D" id="1.20.5.470">
    <property type="entry name" value="Single helix bin"/>
    <property type="match status" value="1"/>
</dbReference>
<dbReference type="HAMAP" id="MF_00005">
    <property type="entry name" value="Arg_succ_synth_type1"/>
    <property type="match status" value="1"/>
</dbReference>
<dbReference type="InterPro" id="IPR048268">
    <property type="entry name" value="Arginosuc_syn_C"/>
</dbReference>
<dbReference type="InterPro" id="IPR048267">
    <property type="entry name" value="Arginosuc_syn_N"/>
</dbReference>
<dbReference type="InterPro" id="IPR001518">
    <property type="entry name" value="Arginosuc_synth"/>
</dbReference>
<dbReference type="InterPro" id="IPR018223">
    <property type="entry name" value="Arginosuc_synth_CS"/>
</dbReference>
<dbReference type="InterPro" id="IPR023434">
    <property type="entry name" value="Arginosuc_synth_type_1_subfam"/>
</dbReference>
<dbReference type="InterPro" id="IPR024074">
    <property type="entry name" value="AS_cat/multimer_dom_body"/>
</dbReference>
<dbReference type="InterPro" id="IPR014729">
    <property type="entry name" value="Rossmann-like_a/b/a_fold"/>
</dbReference>
<dbReference type="NCBIfam" id="TIGR00032">
    <property type="entry name" value="argG"/>
    <property type="match status" value="1"/>
</dbReference>
<dbReference type="NCBIfam" id="NF001770">
    <property type="entry name" value="PRK00509.1"/>
    <property type="match status" value="1"/>
</dbReference>
<dbReference type="PANTHER" id="PTHR11587">
    <property type="entry name" value="ARGININOSUCCINATE SYNTHASE"/>
    <property type="match status" value="1"/>
</dbReference>
<dbReference type="PANTHER" id="PTHR11587:SF2">
    <property type="entry name" value="ARGININOSUCCINATE SYNTHASE"/>
    <property type="match status" value="1"/>
</dbReference>
<dbReference type="Pfam" id="PF20979">
    <property type="entry name" value="Arginosuc_syn_C"/>
    <property type="match status" value="1"/>
</dbReference>
<dbReference type="Pfam" id="PF00764">
    <property type="entry name" value="Arginosuc_synth"/>
    <property type="match status" value="1"/>
</dbReference>
<dbReference type="SUPFAM" id="SSF52402">
    <property type="entry name" value="Adenine nucleotide alpha hydrolases-like"/>
    <property type="match status" value="1"/>
</dbReference>
<dbReference type="SUPFAM" id="SSF69864">
    <property type="entry name" value="Argininosuccinate synthetase, C-terminal domain"/>
    <property type="match status" value="1"/>
</dbReference>
<dbReference type="PROSITE" id="PS00564">
    <property type="entry name" value="ARGININOSUCCIN_SYN_1"/>
    <property type="match status" value="1"/>
</dbReference>
<dbReference type="PROSITE" id="PS00565">
    <property type="entry name" value="ARGININOSUCCIN_SYN_2"/>
    <property type="match status" value="1"/>
</dbReference>